<accession>Q7DJ60</accession>
<accession>Q8XDG4</accession>
<keyword id="KW-0998">Cell outer membrane</keyword>
<keyword id="KW-0472">Membrane</keyword>
<keyword id="KW-0653">Protein transport</keyword>
<keyword id="KW-1185">Reference proteome</keyword>
<keyword id="KW-0732">Signal</keyword>
<keyword id="KW-0812">Transmembrane</keyword>
<keyword id="KW-1134">Transmembrane beta strand</keyword>
<keyword id="KW-0813">Transport</keyword>
<protein>
    <recommendedName>
        <fullName evidence="6">Autotransporter adhesin EhaG</fullName>
    </recommendedName>
    <alternativeName>
        <fullName evidence="6">Type 5 secretion system autotransporter EhaG</fullName>
    </alternativeName>
</protein>
<evidence type="ECO:0000250" key="1">
    <source>
        <dbReference type="UniProtKB" id="A0A0H2VCA1"/>
    </source>
</evidence>
<evidence type="ECO:0000250" key="2">
    <source>
        <dbReference type="UniProtKB" id="A1JUB7"/>
    </source>
</evidence>
<evidence type="ECO:0000255" key="3"/>
<evidence type="ECO:0000269" key="4">
    <source>
    </source>
</evidence>
<evidence type="ECO:0000303" key="5">
    <source>
    </source>
</evidence>
<evidence type="ECO:0000305" key="6"/>
<evidence type="ECO:0000312" key="7">
    <source>
        <dbReference type="EMBL" id="AAG58749.1"/>
    </source>
</evidence>
<evidence type="ECO:0000312" key="8">
    <source>
        <dbReference type="EMBL" id="AMG81107.1"/>
    </source>
</evidence>
<evidence type="ECO:0000312" key="9">
    <source>
        <dbReference type="EMBL" id="ANG71048.1"/>
    </source>
</evidence>
<evidence type="ECO:0000312" key="10">
    <source>
        <dbReference type="EMBL" id="ANG76544.1"/>
    </source>
</evidence>
<evidence type="ECO:0000312" key="11">
    <source>
        <dbReference type="EMBL" id="ANG82226.1"/>
    </source>
</evidence>
<evidence type="ECO:0000312" key="12">
    <source>
        <dbReference type="EMBL" id="BAB37903.1"/>
    </source>
</evidence>
<evidence type="ECO:0000312" key="13">
    <source>
        <dbReference type="EMBL" id="BAB87814.1"/>
    </source>
</evidence>
<dbReference type="EMBL" id="AB036416">
    <property type="protein sequence ID" value="BAB87814.1"/>
    <property type="molecule type" value="Genomic_DNA"/>
</dbReference>
<dbReference type="EMBL" id="AE005174">
    <property type="protein sequence ID" value="AAG58749.1"/>
    <property type="molecule type" value="Genomic_DNA"/>
</dbReference>
<dbReference type="EMBL" id="BA000007">
    <property type="protein sequence ID" value="BAB37903.1"/>
    <property type="molecule type" value="Genomic_DNA"/>
</dbReference>
<dbReference type="EMBL" id="CP014314">
    <property type="protein sequence ID" value="AMG81107.1"/>
    <property type="molecule type" value="Genomic_DNA"/>
</dbReference>
<dbReference type="EMBL" id="CP015842">
    <property type="protein sequence ID" value="ANG71048.1"/>
    <property type="molecule type" value="Genomic_DNA"/>
</dbReference>
<dbReference type="EMBL" id="CP015843">
    <property type="protein sequence ID" value="ANG76544.1"/>
    <property type="molecule type" value="Genomic_DNA"/>
</dbReference>
<dbReference type="EMBL" id="CP015846">
    <property type="protein sequence ID" value="ANG82226.1"/>
    <property type="molecule type" value="Genomic_DNA"/>
</dbReference>
<dbReference type="PIR" id="A86036">
    <property type="entry name" value="A86036"/>
</dbReference>
<dbReference type="PIR" id="H91188">
    <property type="entry name" value="H91188"/>
</dbReference>
<dbReference type="RefSeq" id="NP_312507.1">
    <property type="nucleotide sequence ID" value="NC_002695.1"/>
</dbReference>
<dbReference type="RefSeq" id="WP_001033191.1">
    <property type="nucleotide sequence ID" value="NZ_SEKU01000021.1"/>
</dbReference>
<dbReference type="SMR" id="Q7DJ60"/>
<dbReference type="STRING" id="155864.Z5029"/>
<dbReference type="KEGG" id="ece:Z5029"/>
<dbReference type="KEGG" id="ecs:ECs_4480"/>
<dbReference type="PATRIC" id="fig|386585.9.peg.4695"/>
<dbReference type="eggNOG" id="COG5295">
    <property type="taxonomic scope" value="Bacteria"/>
</dbReference>
<dbReference type="HOGENOM" id="CLU_002363_1_0_6"/>
<dbReference type="OMA" id="TTQINDT"/>
<dbReference type="Proteomes" id="UP000000558">
    <property type="component" value="Chromosome"/>
</dbReference>
<dbReference type="Proteomes" id="UP000002519">
    <property type="component" value="Chromosome"/>
</dbReference>
<dbReference type="GO" id="GO:0009279">
    <property type="term" value="C:cell outer membrane"/>
    <property type="evidence" value="ECO:0007669"/>
    <property type="project" value="UniProtKB-SubCell"/>
</dbReference>
<dbReference type="GO" id="GO:0009986">
    <property type="term" value="C:cell surface"/>
    <property type="evidence" value="ECO:0007669"/>
    <property type="project" value="UniProtKB-SubCell"/>
</dbReference>
<dbReference type="GO" id="GO:0015031">
    <property type="term" value="P:protein transport"/>
    <property type="evidence" value="ECO:0007669"/>
    <property type="project" value="UniProtKB-KW"/>
</dbReference>
<dbReference type="CDD" id="cd12820">
    <property type="entry name" value="LbR_YadA-like"/>
    <property type="match status" value="2"/>
</dbReference>
<dbReference type="Gene3D" id="1.20.5.170">
    <property type="match status" value="7"/>
</dbReference>
<dbReference type="Gene3D" id="1.20.5.2280">
    <property type="match status" value="1"/>
</dbReference>
<dbReference type="Gene3D" id="2.60.40.4050">
    <property type="match status" value="2"/>
</dbReference>
<dbReference type="Gene3D" id="4.10.80.270">
    <property type="match status" value="6"/>
</dbReference>
<dbReference type="Gene3D" id="6.10.250.2030">
    <property type="match status" value="1"/>
</dbReference>
<dbReference type="Gene3D" id="6.10.250.2040">
    <property type="match status" value="1"/>
</dbReference>
<dbReference type="Gene3D" id="3.30.1300.30">
    <property type="entry name" value="GSPII I/J protein-like"/>
    <property type="match status" value="1"/>
</dbReference>
<dbReference type="Gene3D" id="2.150.10.10">
    <property type="entry name" value="Serralysin-like metalloprotease, C-terminal"/>
    <property type="match status" value="4"/>
</dbReference>
<dbReference type="InterPro" id="IPR008640">
    <property type="entry name" value="Adhesin_Head_dom"/>
</dbReference>
<dbReference type="InterPro" id="IPR008635">
    <property type="entry name" value="Coiled_stalk_dom"/>
</dbReference>
<dbReference type="InterPro" id="IPR024973">
    <property type="entry name" value="ESPR"/>
</dbReference>
<dbReference type="InterPro" id="IPR045584">
    <property type="entry name" value="Pilin-like"/>
</dbReference>
<dbReference type="InterPro" id="IPR011049">
    <property type="entry name" value="Serralysin-like_metalloprot_C"/>
</dbReference>
<dbReference type="InterPro" id="IPR005594">
    <property type="entry name" value="YadA_C"/>
</dbReference>
<dbReference type="Pfam" id="PF13018">
    <property type="entry name" value="ESPR"/>
    <property type="match status" value="1"/>
</dbReference>
<dbReference type="Pfam" id="PF03895">
    <property type="entry name" value="YadA_anchor"/>
    <property type="match status" value="1"/>
</dbReference>
<dbReference type="Pfam" id="PF05658">
    <property type="entry name" value="YadA_head"/>
    <property type="match status" value="16"/>
</dbReference>
<dbReference type="Pfam" id="PF05662">
    <property type="entry name" value="YadA_stalk"/>
    <property type="match status" value="12"/>
</dbReference>
<dbReference type="SUPFAM" id="SSF101967">
    <property type="entry name" value="Adhesin YadA, collagen-binding domain"/>
    <property type="match status" value="9"/>
</dbReference>
<dbReference type="SUPFAM" id="SSF54523">
    <property type="entry name" value="Pili subunits"/>
    <property type="match status" value="1"/>
</dbReference>
<organism>
    <name type="scientific">Escherichia coli O157:H7</name>
    <dbReference type="NCBI Taxonomy" id="83334"/>
    <lineage>
        <taxon>Bacteria</taxon>
        <taxon>Pseudomonadati</taxon>
        <taxon>Pseudomonadota</taxon>
        <taxon>Gammaproteobacteria</taxon>
        <taxon>Enterobacterales</taxon>
        <taxon>Enterobacteriaceae</taxon>
        <taxon>Escherichia</taxon>
    </lineage>
</organism>
<feature type="signal peptide" evidence="3">
    <location>
        <begin position="1"/>
        <end position="53"/>
    </location>
</feature>
<feature type="chain" id="PRO_0000437738" description="Autotransporter adhesin EhaG">
    <location>
        <begin position="54"/>
        <end position="1588"/>
    </location>
</feature>
<feature type="transmembrane region" description="Beta stranded" evidence="2">
    <location>
        <begin position="1534"/>
        <end position="1544"/>
    </location>
</feature>
<feature type="transmembrane region" description="Beta stranded" evidence="2">
    <location>
        <begin position="1548"/>
        <end position="1558"/>
    </location>
</feature>
<feature type="transmembrane region" description="Beta stranded" evidence="2">
    <location>
        <begin position="1567"/>
        <end position="1573"/>
    </location>
</feature>
<feature type="transmembrane region" description="Beta stranded" evidence="2">
    <location>
        <begin position="1577"/>
        <end position="1588"/>
    </location>
</feature>
<feature type="region of interest" description="Surface exposed passenger domain" evidence="6">
    <location>
        <begin position="54"/>
        <end position="1499"/>
    </location>
</feature>
<feature type="region of interest" description="Translocator domain" evidence="6">
    <location>
        <begin position="1500"/>
        <end position="1588"/>
    </location>
</feature>
<reference key="1">
    <citation type="submission" date="1999-12" db="EMBL/GenBank/DDBJ databases">
        <title>O157 specific gene similar to H. influenzae adhesin gene.</title>
        <authorList>
            <person name="Makino K."/>
            <person name="Yutsudo C.H."/>
            <person name="Yokoyama K."/>
            <person name="Kubota Y."/>
            <person name="Kimura S."/>
            <person name="Shinagawa H."/>
        </authorList>
    </citation>
    <scope>NUCLEOTIDE SEQUENCE [GENOMIC DNA]</scope>
    <source>
        <strain>O157:H7 / Sakai / RIMD 0509952 / EHEC</strain>
    </source>
</reference>
<reference key="2">
    <citation type="journal article" date="2001" name="Nature">
        <title>Genome sequence of enterohaemorrhagic Escherichia coli O157:H7.</title>
        <authorList>
            <person name="Perna N.T."/>
            <person name="Plunkett G. III"/>
            <person name="Burland V."/>
            <person name="Mau B."/>
            <person name="Glasner J.D."/>
            <person name="Rose D.J."/>
            <person name="Mayhew G.F."/>
            <person name="Evans P.S."/>
            <person name="Gregor J."/>
            <person name="Kirkpatrick H.A."/>
            <person name="Posfai G."/>
            <person name="Hackett J."/>
            <person name="Klink S."/>
            <person name="Boutin A."/>
            <person name="Shao Y."/>
            <person name="Miller L."/>
            <person name="Grotbeck E.J."/>
            <person name="Davis N.W."/>
            <person name="Lim A."/>
            <person name="Dimalanta E.T."/>
            <person name="Potamousis K."/>
            <person name="Apodaca J."/>
            <person name="Anantharaman T.S."/>
            <person name="Lin J."/>
            <person name="Yen G."/>
            <person name="Schwartz D.C."/>
            <person name="Welch R.A."/>
            <person name="Blattner F.R."/>
        </authorList>
    </citation>
    <scope>NUCLEOTIDE SEQUENCE [LARGE SCALE GENOMIC DNA]</scope>
    <source>
        <strain>O157:H7 / EDL933 / ATCC 700927 / EHEC</strain>
    </source>
</reference>
<reference key="3">
    <citation type="journal article" date="2001" name="DNA Res.">
        <title>Complete genome sequence of enterohemorrhagic Escherichia coli O157:H7 and genomic comparison with a laboratory strain K-12.</title>
        <authorList>
            <person name="Hayashi T."/>
            <person name="Makino K."/>
            <person name="Ohnishi M."/>
            <person name="Kurokawa K."/>
            <person name="Ishii K."/>
            <person name="Yokoyama K."/>
            <person name="Han C.-G."/>
            <person name="Ohtsubo E."/>
            <person name="Nakayama K."/>
            <person name="Murata T."/>
            <person name="Tanaka M."/>
            <person name="Tobe T."/>
            <person name="Iida T."/>
            <person name="Takami H."/>
            <person name="Honda T."/>
            <person name="Sasakawa C."/>
            <person name="Ogasawara N."/>
            <person name="Yasunaga T."/>
            <person name="Kuhara S."/>
            <person name="Shiba T."/>
            <person name="Hattori M."/>
            <person name="Shinagawa H."/>
        </authorList>
    </citation>
    <scope>NUCLEOTIDE SEQUENCE [LARGE SCALE GENOMIC DNA]</scope>
    <source>
        <strain>O157:H7 / Sakai / RIMD 0509952 / EHEC</strain>
    </source>
</reference>
<reference key="4">
    <citation type="journal article" date="2016" name="Genome Announc.">
        <title>Complete genome sequence of an Escherichia coli O157:H7 strain isolated from a super-shedder steer.</title>
        <authorList>
            <person name="Teng L."/>
            <person name="Ginn A."/>
            <person name="Jeon S."/>
            <person name="Kang M."/>
            <person name="Jeong K.C."/>
        </authorList>
    </citation>
    <scope>NUCLEOTIDE SEQUENCE [LARGE SCALE GENOMIC DNA]</scope>
    <source>
        <strain>O157:H7 / JEONG-1266 / STEC</strain>
    </source>
</reference>
<reference key="5">
    <citation type="submission" date="2016-05" db="EMBL/GenBank/DDBJ databases">
        <authorList>
            <person name="Kasper C."/>
            <person name="Jeong K.C."/>
            <person name="Ginn A."/>
        </authorList>
    </citation>
    <scope>NUCLEOTIDE SEQUENCE [LARGE SCALE GENOMIC DNA]</scope>
    <source>
        <strain>FRIK2069</strain>
        <strain>FRIK2455</strain>
        <strain>FRIK2533</strain>
    </source>
</reference>
<reference key="6">
    <citation type="journal article" date="2012" name="Appl. Environ. Microbiol.">
        <title>Molecular characterization of the EhaG and UpaG trimeric autotransporter proteins from pathogenic Escherichia coli.</title>
        <authorList>
            <person name="Totsika M."/>
            <person name="Wells T.J."/>
            <person name="Beloin C."/>
            <person name="Valle J."/>
            <person name="Allsopp L.P."/>
            <person name="King N.P."/>
            <person name="Ghigo J.M."/>
            <person name="Schembri M.A."/>
        </authorList>
    </citation>
    <scope>FUNCTION</scope>
    <scope>INDUCTION</scope>
    <source>
        <strain>O157:H7 / EDL933 / ATCC 700927 / EHEC</strain>
    </source>
</reference>
<proteinExistence type="evidence at transcript level"/>
<comment type="function">
    <text evidence="4">Mediates aggregation, biofilm formation and adhesion to a range of extracellular matrix (ECM) proteins, such as fibronectin, fibrinogen, laminin and collagen types I, II, III, and V. Mediates adhesion to intestinal epithelial cells.</text>
</comment>
<comment type="subunit">
    <text evidence="1">Homotrimer.</text>
</comment>
<comment type="subcellular location">
    <subcellularLocation>
        <location evidence="1">Cell surface</location>
    </subcellularLocation>
    <subcellularLocation>
        <location evidence="1">Cell outer membrane</location>
    </subcellularLocation>
    <text evidence="1">The C-terminal translocator domain is localized in the outer membrane and the passenger domain is at the cell surface.</text>
</comment>
<comment type="induction">
    <text evidence="4">Expression is negatively regulated by H-NS.</text>
</comment>
<comment type="domain">
    <text evidence="1">The signal peptide, cleaved at the inner membrane, guides the autotransporter protein to the periplasmic space. Then, insertion of the C-terminal translocator domain in the outer membrane forms a hydrophilic pore for the translocation of the passenger domain to the bacterial cell surface.</text>
</comment>
<comment type="similarity">
    <text evidence="6">Belongs to the autotransporter-2 (AT-2) (TC 1.B.40) family.</text>
</comment>
<name>EHAG_ECO57</name>
<sequence>MNKIFKVIWNPATGNYTVTSETAKSRGKKSGRSKLLISALVAGGMLSSFGALANAGNDNGQGVDYGSGSAGDGWVAIGKGAKANTFMNTSGSSTAVGYDAIAEGQYSSAIGSKTHAIGGASMAFGVSAISEGDRSIALGASSYSLGQYSMALGRYSKALGKLSIAMGDSSKAEGANAIALGNATKATEIMSIALGDTANASKAYSMALGASSVASEENAIAIGAETEAAENATAIGNNAKAKGTNSMAMGFGSLADKVNTIALGNGSQALADNAIAIGQGNKADGVDAIALGNGSQSRGLNTIALGTASNATGDKSLALGSNSSANGINSVALGADSIADLDNTVSVGNSSLKRKIVNVKNGAIKSDSYDAINGSQLYAISDSVAKRLGGGAAVDVDDGTVTAPTYNLKNGSKNNVGAALAVLDENTLQWDQTKGKYSAAHGTSSPTASVITDVADGTISASSKDAVNGSQLKATNDDVEANTANIATNTSNIATNTANIATNTTNITNLTDSVGDLQADALLWNETKKAFSAAHGQDTTSKITNVKDADLTADSTDAVNGSQLKTTNDAVATNTTNIANNTSNIATNTTNISNLTETVTNLGEDALKWDKDNGVFTAAHGTETTSKITNVKDGDLTTGSTDAVNGSQLKTTNDAVATNTTNIATNTTNISNLTETVTNLGEDALKWDKDNGVFTAAHGNNTASKITNILDGTVTATSSDAINGSQLYDLSSNIATYFGGNASVNTDGVFTGPTYKIGETNYYNVGDALAAINSSFSTSLGDALLWDATAGKFSAKHGTNGDASVITDVADGEISDSSSDAVNGSQLHGVSSYVVDALGGGAEVNADGTITAPTYTIANADYDNVGDALNAIDTTLDDALLWDADAGENGAFSAAHGKDKTASVITNVANGAISAASSDAINGSQLYTTNKYIADALGGDAEVNADGTITAPTYTIANAEYNNVGDALDALDDNALLWDETANGGAGAYNASHDGKASIITNVANGSISEDSTDAVNGSQLNATNMMIEQNTQIINQLAGNTDATYIQENGAGINYVRTNDDGLAFNDASAQGVGATAIGYNSVAKGDSSVAIGQGSYSDVDTGIALGSSSVSSRVIAKGSRDTSITENGVVIGYDTTDGELLGALSIGDDGKYRQIINVADGSEAHDAVTVRQLQNAIGAVATTPTKYFHANSTEEDSLAVGTDSLAMGAKTIVNGDKGIGIGYGAYVDANALNGIAIGSNAQVIHVNSIAIGNGSTTTRGAQTNYTAYNMDAPQNSVGEFSVGSADGQRQITNVAAGSADTDAVNVGQLKVTDAQVSQNTQSITNLDNRVTNLDSRVTNIENGIGDIVTTGSTKYFKTNTDGVDASAQGKDSVAIGSGSIAAADNSVALGTGSVATEENTISVGSSTNQRRITNVAAGKNATDAVNVAQLKSSEAGGVRYDTKADGSIDYSNITLGGGNGGTTRISNVSAGVNNNDVVNYAQLKQSVQETKQYTDQRMVEMDNKLSKTESKLSGGIASAMAMTGLPQAYTPGASMASIGGGTYNGESAVALGVSMVSANGRWVYKLQGSTNSQGEYSAALGAGIQW</sequence>
<gene>
    <name evidence="5" type="primary">ehaG</name>
    <name evidence="13" type="synonym">H161</name>
    <name evidence="12" type="ordered locus">ECs4480</name>
    <name evidence="7" type="ordered locus">Z5029</name>
    <name evidence="11" type="ORF">A8V30_24325</name>
    <name evidence="9" type="ORF">A8V31_24315</name>
    <name evidence="10" type="ORF">A8V32_24030</name>
    <name evidence="8" type="ORF">JEONG1266_25035</name>
</gene>